<gene>
    <name evidence="4" type="primary">efuD</name>
</gene>
<feature type="chain" id="PRO_0000454461" description="Transcription factor efuD">
    <location>
        <begin position="1"/>
        <end position="454"/>
    </location>
</feature>
<feature type="domain" description="HTH TFE/IIEalpha-type" evidence="1">
    <location>
        <begin position="4"/>
        <end position="111"/>
    </location>
</feature>
<feature type="region of interest" description="Disordered" evidence="2">
    <location>
        <begin position="327"/>
        <end position="454"/>
    </location>
</feature>
<feature type="compositionally biased region" description="Acidic residues" evidence="2">
    <location>
        <begin position="353"/>
        <end position="372"/>
    </location>
</feature>
<feature type="compositionally biased region" description="Polar residues" evidence="2">
    <location>
        <begin position="387"/>
        <end position="401"/>
    </location>
</feature>
<feature type="compositionally biased region" description="Low complexity" evidence="2">
    <location>
        <begin position="423"/>
        <end position="437"/>
    </location>
</feature>
<feature type="compositionally biased region" description="Acidic residues" evidence="2">
    <location>
        <begin position="442"/>
        <end position="454"/>
    </location>
</feature>
<keyword id="KW-0396">Initiation factor</keyword>
<keyword id="KW-0539">Nucleus</keyword>
<keyword id="KW-0648">Protein biosynthesis</keyword>
<keyword id="KW-0804">Transcription</keyword>
<keyword id="KW-0805">Transcription regulation</keyword>
<protein>
    <recommendedName>
        <fullName evidence="4">Transcription factor efuD</fullName>
    </recommendedName>
    <alternativeName>
        <fullName evidence="4">Enfumafungin biosynthesis cluster protein D</fullName>
    </alternativeName>
</protein>
<accession>A0A2Z4HPY1</accession>
<reference key="1">
    <citation type="journal article" date="2018" name="Environ. Microbiol.">
        <title>Enfumafungin synthase represents a novel lineage of fungal triterpene cyclases.</title>
        <authorList>
            <person name="Kuhnert E."/>
            <person name="Li Y."/>
            <person name="Lan N."/>
            <person name="Yue Q."/>
            <person name="Chen L."/>
            <person name="Cox R.J."/>
            <person name="An Z."/>
            <person name="Yokoyama K."/>
            <person name="Bills G.F."/>
        </authorList>
    </citation>
    <scope>NUCLEOTIDE SEQUENCE [GENOMIC DNA]</scope>
    <scope>FUNCTION</scope>
</reference>
<organism>
    <name type="scientific">Hormonema carpetanum</name>
    <dbReference type="NCBI Taxonomy" id="284138"/>
    <lineage>
        <taxon>Eukaryota</taxon>
        <taxon>Fungi</taxon>
        <taxon>Dikarya</taxon>
        <taxon>Ascomycota</taxon>
        <taxon>Pezizomycotina</taxon>
        <taxon>Dothideomycetes</taxon>
        <taxon>Dothideomycetidae</taxon>
        <taxon>Dothideales</taxon>
        <taxon>Dothioraceae</taxon>
        <taxon>Hormonema</taxon>
    </lineage>
</organism>
<comment type="function">
    <text evidence="3 6">Transcription factor; part of the gene cluster that mediates the biosynthesis of enfumafungin, a glycosylated fernene-type triterpenoid with potent antifungal activity, mediated by its interaction with beta-1,3-glucan synthase and the fungal cell wall (PubMed:30051576). Is possibly responsible for the transcription regulation of one or more genes within the gene cluster (Probable).</text>
</comment>
<comment type="subcellular location">
    <subcellularLocation>
        <location evidence="5">Nucleus</location>
    </subcellularLocation>
</comment>
<comment type="similarity">
    <text evidence="5">Belongs to the TFIIE alpha subunit family.</text>
</comment>
<dbReference type="EMBL" id="MF611885">
    <property type="protein sequence ID" value="AWW17213.1"/>
    <property type="molecule type" value="Genomic_DNA"/>
</dbReference>
<dbReference type="SMR" id="A0A2Z4HPY1"/>
<dbReference type="GO" id="GO:0005673">
    <property type="term" value="C:transcription factor TFIIE complex"/>
    <property type="evidence" value="ECO:0007669"/>
    <property type="project" value="TreeGrafter"/>
</dbReference>
<dbReference type="GO" id="GO:0003743">
    <property type="term" value="F:translation initiation factor activity"/>
    <property type="evidence" value="ECO:0007669"/>
    <property type="project" value="UniProtKB-KW"/>
</dbReference>
<dbReference type="GO" id="GO:0006367">
    <property type="term" value="P:transcription initiation at RNA polymerase II promoter"/>
    <property type="evidence" value="ECO:0007669"/>
    <property type="project" value="InterPro"/>
</dbReference>
<dbReference type="Gene3D" id="3.30.40.10">
    <property type="entry name" value="Zinc/RING finger domain, C3HC4 (zinc finger)"/>
    <property type="match status" value="1"/>
</dbReference>
<dbReference type="InterPro" id="IPR039997">
    <property type="entry name" value="TFE"/>
</dbReference>
<dbReference type="InterPro" id="IPR017919">
    <property type="entry name" value="TFIIE/TFIIEa_HTH"/>
</dbReference>
<dbReference type="InterPro" id="IPR002853">
    <property type="entry name" value="TFIIE_asu"/>
</dbReference>
<dbReference type="InterPro" id="IPR024550">
    <property type="entry name" value="TFIIEa/SarR/Rpc3_HTH_dom"/>
</dbReference>
<dbReference type="InterPro" id="IPR013083">
    <property type="entry name" value="Znf_RING/FYVE/PHD"/>
</dbReference>
<dbReference type="PANTHER" id="PTHR13097:SF7">
    <property type="entry name" value="GENERAL TRANSCRIPTION FACTOR IIE SUBUNIT 1"/>
    <property type="match status" value="1"/>
</dbReference>
<dbReference type="PANTHER" id="PTHR13097">
    <property type="entry name" value="TRANSCRIPTION INITIATION FACTOR IIE, ALPHA SUBUNIT"/>
    <property type="match status" value="1"/>
</dbReference>
<dbReference type="Pfam" id="PF02002">
    <property type="entry name" value="TFIIE_alpha"/>
    <property type="match status" value="1"/>
</dbReference>
<dbReference type="SMART" id="SM00531">
    <property type="entry name" value="TFIIE"/>
    <property type="match status" value="1"/>
</dbReference>
<dbReference type="SUPFAM" id="SSF57783">
    <property type="entry name" value="Zinc beta-ribbon"/>
    <property type="match status" value="1"/>
</dbReference>
<dbReference type="PROSITE" id="PS51344">
    <property type="entry name" value="HTH_TFE_IIE"/>
    <property type="match status" value="1"/>
</dbReference>
<sequence>MDPAKELIRITARAFYSTEHVLIIDALAIHSTLNDIDLAHILGMQLKGLRRLVGRLKEDGLISVESRGEKKEGAPPMTTLGKDGQPTSIKERLFYRDWYYLNYHRAIDSIKYRMMKLSKYIESQGAPTTEKKDLVCPRCKSQYTELEVMDNISPMGDFLCHMCQHSLDPATEDDTGENENMKRLNDQLSRIVDIMRNIDSTDVPENDFDTALSHALPIDRGSSNPARRIEIVESKPSIASTKGLSTAPDQISVSVMEDGDGVKIDPEELARRREKEAKQNMLPEWISKSTISGDITSVGAKEAAERASRDAHNMGLRVEDVAEDKKLRTDDDGAMDSYWAALKAEQERQAQQDQDEEEEEEDDDDDEFEDVDVGTASAQPASVPAISVSTPATSAQVSSTATDEDGPAAKRTKVTEAQSNGTAPAAAASSQAAAAESKNGESDEDEDELEFEDI</sequence>
<name>EFUD_HORCR</name>
<proteinExistence type="inferred from homology"/>
<evidence type="ECO:0000255" key="1">
    <source>
        <dbReference type="PROSITE-ProRule" id="PRU00676"/>
    </source>
</evidence>
<evidence type="ECO:0000256" key="2">
    <source>
        <dbReference type="SAM" id="MobiDB-lite"/>
    </source>
</evidence>
<evidence type="ECO:0000269" key="3">
    <source>
    </source>
</evidence>
<evidence type="ECO:0000303" key="4">
    <source>
    </source>
</evidence>
<evidence type="ECO:0000305" key="5"/>
<evidence type="ECO:0000305" key="6">
    <source>
    </source>
</evidence>